<proteinExistence type="inferred from homology"/>
<name>LPTE_YERPY</name>
<accession>B1JGA6</accession>
<protein>
    <recommendedName>
        <fullName evidence="1">LPS-assembly lipoprotein LptE</fullName>
    </recommendedName>
</protein>
<evidence type="ECO:0000255" key="1">
    <source>
        <dbReference type="HAMAP-Rule" id="MF_01186"/>
    </source>
</evidence>
<evidence type="ECO:0000256" key="2">
    <source>
        <dbReference type="SAM" id="MobiDB-lite"/>
    </source>
</evidence>
<comment type="function">
    <text evidence="1">Together with LptD, is involved in the assembly of lipopolysaccharide (LPS) at the surface of the outer membrane. Required for the proper assembly of LptD. Binds LPS and may serve as the LPS recognition site at the outer membrane.</text>
</comment>
<comment type="subunit">
    <text evidence="1">Component of the lipopolysaccharide transport and assembly complex. Interacts with LptD.</text>
</comment>
<comment type="subcellular location">
    <subcellularLocation>
        <location evidence="1">Cell outer membrane</location>
        <topology evidence="1">Lipid-anchor</topology>
    </subcellularLocation>
</comment>
<comment type="similarity">
    <text evidence="1">Belongs to the LptE lipoprotein family.</text>
</comment>
<keyword id="KW-0998">Cell outer membrane</keyword>
<keyword id="KW-0449">Lipoprotein</keyword>
<keyword id="KW-0472">Membrane</keyword>
<keyword id="KW-0564">Palmitate</keyword>
<keyword id="KW-0732">Signal</keyword>
<dbReference type="EMBL" id="CP000950">
    <property type="protein sequence ID" value="ACA69289.1"/>
    <property type="molecule type" value="Genomic_DNA"/>
</dbReference>
<dbReference type="RefSeq" id="WP_002210332.1">
    <property type="nucleotide sequence ID" value="NZ_CP009792.1"/>
</dbReference>
<dbReference type="SMR" id="B1JGA6"/>
<dbReference type="GeneID" id="57976086"/>
<dbReference type="KEGG" id="ypy:YPK_3016"/>
<dbReference type="PATRIC" id="fig|502800.11.peg.3737"/>
<dbReference type="GO" id="GO:0009279">
    <property type="term" value="C:cell outer membrane"/>
    <property type="evidence" value="ECO:0007669"/>
    <property type="project" value="UniProtKB-SubCell"/>
</dbReference>
<dbReference type="GO" id="GO:1990351">
    <property type="term" value="C:transporter complex"/>
    <property type="evidence" value="ECO:0007669"/>
    <property type="project" value="TreeGrafter"/>
</dbReference>
<dbReference type="GO" id="GO:0001530">
    <property type="term" value="F:lipopolysaccharide binding"/>
    <property type="evidence" value="ECO:0007669"/>
    <property type="project" value="TreeGrafter"/>
</dbReference>
<dbReference type="GO" id="GO:0043165">
    <property type="term" value="P:Gram-negative-bacterium-type cell outer membrane assembly"/>
    <property type="evidence" value="ECO:0007669"/>
    <property type="project" value="UniProtKB-UniRule"/>
</dbReference>
<dbReference type="GO" id="GO:0015920">
    <property type="term" value="P:lipopolysaccharide transport"/>
    <property type="evidence" value="ECO:0007669"/>
    <property type="project" value="TreeGrafter"/>
</dbReference>
<dbReference type="Gene3D" id="3.30.160.150">
    <property type="entry name" value="Lipoprotein like domain"/>
    <property type="match status" value="1"/>
</dbReference>
<dbReference type="HAMAP" id="MF_01186">
    <property type="entry name" value="LPS_assembly_LptE"/>
    <property type="match status" value="1"/>
</dbReference>
<dbReference type="InterPro" id="IPR007485">
    <property type="entry name" value="LPS_assembly_LptE"/>
</dbReference>
<dbReference type="NCBIfam" id="NF008062">
    <property type="entry name" value="PRK10796.1"/>
    <property type="match status" value="1"/>
</dbReference>
<dbReference type="PANTHER" id="PTHR38098">
    <property type="entry name" value="LPS-ASSEMBLY LIPOPROTEIN LPTE"/>
    <property type="match status" value="1"/>
</dbReference>
<dbReference type="PANTHER" id="PTHR38098:SF1">
    <property type="entry name" value="LPS-ASSEMBLY LIPOPROTEIN LPTE"/>
    <property type="match status" value="1"/>
</dbReference>
<dbReference type="Pfam" id="PF04390">
    <property type="entry name" value="LptE"/>
    <property type="match status" value="1"/>
</dbReference>
<dbReference type="PROSITE" id="PS51257">
    <property type="entry name" value="PROKAR_LIPOPROTEIN"/>
    <property type="match status" value="1"/>
</dbReference>
<reference key="1">
    <citation type="submission" date="2008-02" db="EMBL/GenBank/DDBJ databases">
        <title>Complete sequence of Yersinia pseudotuberculosis YPIII.</title>
        <authorList>
            <consortium name="US DOE Joint Genome Institute"/>
            <person name="Copeland A."/>
            <person name="Lucas S."/>
            <person name="Lapidus A."/>
            <person name="Glavina del Rio T."/>
            <person name="Dalin E."/>
            <person name="Tice H."/>
            <person name="Bruce D."/>
            <person name="Goodwin L."/>
            <person name="Pitluck S."/>
            <person name="Munk A.C."/>
            <person name="Brettin T."/>
            <person name="Detter J.C."/>
            <person name="Han C."/>
            <person name="Tapia R."/>
            <person name="Schmutz J."/>
            <person name="Larimer F."/>
            <person name="Land M."/>
            <person name="Hauser L."/>
            <person name="Challacombe J.F."/>
            <person name="Green L."/>
            <person name="Lindler L.E."/>
            <person name="Nikolich M.P."/>
            <person name="Richardson P."/>
        </authorList>
    </citation>
    <scope>NUCLEOTIDE SEQUENCE [LARGE SCALE GENOMIC DNA]</scope>
    <source>
        <strain>YPIII</strain>
    </source>
</reference>
<gene>
    <name evidence="1" type="primary">lptE</name>
    <name type="synonym">rlpB</name>
    <name type="ordered locus">YPK_3016</name>
</gene>
<sequence length="207" mass="22570">MRHRILTLLLGLAVLVTAGCGFNLRGTTQVPTELQKLLLESSDPYGPLARSIRQQLRLNNVTIVDDAMRKDIPTLRIIGSSESQETVSIFRNGVAAENQLVLHVQAQVLIPGHDIYPLQVNVFRTFFDNPLTALAKEAEAEVLRQEMREQAAQQLVRQLLTVHAAEVKNTQKNGDKPVSDANAAQGSTPTAVNETTLGEPAVSTSAK</sequence>
<feature type="signal peptide" evidence="1">
    <location>
        <begin position="1"/>
        <end position="19"/>
    </location>
</feature>
<feature type="chain" id="PRO_1000138285" description="LPS-assembly lipoprotein LptE">
    <location>
        <begin position="20"/>
        <end position="207"/>
    </location>
</feature>
<feature type="region of interest" description="Disordered" evidence="2">
    <location>
        <begin position="168"/>
        <end position="207"/>
    </location>
</feature>
<feature type="compositionally biased region" description="Polar residues" evidence="2">
    <location>
        <begin position="182"/>
        <end position="207"/>
    </location>
</feature>
<feature type="lipid moiety-binding region" description="N-palmitoyl cysteine" evidence="1">
    <location>
        <position position="20"/>
    </location>
</feature>
<feature type="lipid moiety-binding region" description="S-diacylglycerol cysteine" evidence="1">
    <location>
        <position position="20"/>
    </location>
</feature>
<organism>
    <name type="scientific">Yersinia pseudotuberculosis serotype O:3 (strain YPIII)</name>
    <dbReference type="NCBI Taxonomy" id="502800"/>
    <lineage>
        <taxon>Bacteria</taxon>
        <taxon>Pseudomonadati</taxon>
        <taxon>Pseudomonadota</taxon>
        <taxon>Gammaproteobacteria</taxon>
        <taxon>Enterobacterales</taxon>
        <taxon>Yersiniaceae</taxon>
        <taxon>Yersinia</taxon>
    </lineage>
</organism>